<dbReference type="EC" id="3.4.25.2" evidence="1"/>
<dbReference type="EMBL" id="CP000151">
    <property type="protein sequence ID" value="ABB10035.1"/>
    <property type="molecule type" value="Genomic_DNA"/>
</dbReference>
<dbReference type="RefSeq" id="WP_011353540.1">
    <property type="nucleotide sequence ID" value="NZ_WNDV01000015.1"/>
</dbReference>
<dbReference type="SMR" id="Q39BY1"/>
<dbReference type="MEROPS" id="T01.006"/>
<dbReference type="GeneID" id="93052137"/>
<dbReference type="KEGG" id="bur:Bcep18194_A6441"/>
<dbReference type="PATRIC" id="fig|482957.22.peg.3472"/>
<dbReference type="HOGENOM" id="CLU_093872_1_0_4"/>
<dbReference type="Proteomes" id="UP000002705">
    <property type="component" value="Chromosome 1"/>
</dbReference>
<dbReference type="GO" id="GO:0009376">
    <property type="term" value="C:HslUV protease complex"/>
    <property type="evidence" value="ECO:0007669"/>
    <property type="project" value="UniProtKB-UniRule"/>
</dbReference>
<dbReference type="GO" id="GO:0005839">
    <property type="term" value="C:proteasome core complex"/>
    <property type="evidence" value="ECO:0007669"/>
    <property type="project" value="InterPro"/>
</dbReference>
<dbReference type="GO" id="GO:0046872">
    <property type="term" value="F:metal ion binding"/>
    <property type="evidence" value="ECO:0007669"/>
    <property type="project" value="UniProtKB-KW"/>
</dbReference>
<dbReference type="GO" id="GO:0004298">
    <property type="term" value="F:threonine-type endopeptidase activity"/>
    <property type="evidence" value="ECO:0007669"/>
    <property type="project" value="UniProtKB-KW"/>
</dbReference>
<dbReference type="GO" id="GO:0051603">
    <property type="term" value="P:proteolysis involved in protein catabolic process"/>
    <property type="evidence" value="ECO:0007669"/>
    <property type="project" value="InterPro"/>
</dbReference>
<dbReference type="CDD" id="cd01913">
    <property type="entry name" value="protease_HslV"/>
    <property type="match status" value="1"/>
</dbReference>
<dbReference type="FunFam" id="3.60.20.10:FF:000002">
    <property type="entry name" value="ATP-dependent protease subunit HslV"/>
    <property type="match status" value="1"/>
</dbReference>
<dbReference type="Gene3D" id="3.60.20.10">
    <property type="entry name" value="Glutamine Phosphoribosylpyrophosphate, subunit 1, domain 1"/>
    <property type="match status" value="1"/>
</dbReference>
<dbReference type="HAMAP" id="MF_00248">
    <property type="entry name" value="HslV"/>
    <property type="match status" value="1"/>
</dbReference>
<dbReference type="InterPro" id="IPR022281">
    <property type="entry name" value="ATP-dep_Prtase_HsIV_su"/>
</dbReference>
<dbReference type="InterPro" id="IPR029055">
    <property type="entry name" value="Ntn_hydrolases_N"/>
</dbReference>
<dbReference type="InterPro" id="IPR001353">
    <property type="entry name" value="Proteasome_sua/b"/>
</dbReference>
<dbReference type="InterPro" id="IPR023333">
    <property type="entry name" value="Proteasome_suB-type"/>
</dbReference>
<dbReference type="NCBIfam" id="TIGR03692">
    <property type="entry name" value="ATP_dep_HslV"/>
    <property type="match status" value="1"/>
</dbReference>
<dbReference type="NCBIfam" id="NF003964">
    <property type="entry name" value="PRK05456.1"/>
    <property type="match status" value="1"/>
</dbReference>
<dbReference type="PANTHER" id="PTHR32194:SF0">
    <property type="entry name" value="ATP-DEPENDENT PROTEASE SUBUNIT HSLV"/>
    <property type="match status" value="1"/>
</dbReference>
<dbReference type="PANTHER" id="PTHR32194">
    <property type="entry name" value="METALLOPROTEASE TLDD"/>
    <property type="match status" value="1"/>
</dbReference>
<dbReference type="Pfam" id="PF00227">
    <property type="entry name" value="Proteasome"/>
    <property type="match status" value="1"/>
</dbReference>
<dbReference type="PIRSF" id="PIRSF039093">
    <property type="entry name" value="HslV"/>
    <property type="match status" value="1"/>
</dbReference>
<dbReference type="SUPFAM" id="SSF56235">
    <property type="entry name" value="N-terminal nucleophile aminohydrolases (Ntn hydrolases)"/>
    <property type="match status" value="1"/>
</dbReference>
<dbReference type="PROSITE" id="PS51476">
    <property type="entry name" value="PROTEASOME_BETA_2"/>
    <property type="match status" value="1"/>
</dbReference>
<accession>Q39BY1</accession>
<name>HSLV_BURL3</name>
<feature type="chain" id="PRO_1000012592" description="ATP-dependent protease subunit HslV">
    <location>
        <begin position="1"/>
        <end position="178"/>
    </location>
</feature>
<feature type="active site" evidence="1">
    <location>
        <position position="7"/>
    </location>
</feature>
<feature type="binding site" evidence="1">
    <location>
        <position position="162"/>
    </location>
    <ligand>
        <name>Na(+)</name>
        <dbReference type="ChEBI" id="CHEBI:29101"/>
    </ligand>
</feature>
<feature type="binding site" evidence="1">
    <location>
        <position position="165"/>
    </location>
    <ligand>
        <name>Na(+)</name>
        <dbReference type="ChEBI" id="CHEBI:29101"/>
    </ligand>
</feature>
<feature type="binding site" evidence="1">
    <location>
        <position position="168"/>
    </location>
    <ligand>
        <name>Na(+)</name>
        <dbReference type="ChEBI" id="CHEBI:29101"/>
    </ligand>
</feature>
<protein>
    <recommendedName>
        <fullName evidence="1">ATP-dependent protease subunit HslV</fullName>
        <ecNumber evidence="1">3.4.25.2</ecNumber>
    </recommendedName>
</protein>
<organism>
    <name type="scientific">Burkholderia lata (strain ATCC 17760 / DSM 23089 / LMG 22485 / NCIMB 9086 / R18194 / 383)</name>
    <dbReference type="NCBI Taxonomy" id="482957"/>
    <lineage>
        <taxon>Bacteria</taxon>
        <taxon>Pseudomonadati</taxon>
        <taxon>Pseudomonadota</taxon>
        <taxon>Betaproteobacteria</taxon>
        <taxon>Burkholderiales</taxon>
        <taxon>Burkholderiaceae</taxon>
        <taxon>Burkholderia</taxon>
        <taxon>Burkholderia cepacia complex</taxon>
    </lineage>
</organism>
<proteinExistence type="inferred from homology"/>
<gene>
    <name evidence="1" type="primary">hslV</name>
    <name type="ordered locus">Bcep18194_A6441</name>
</gene>
<sequence length="178" mass="19245">MEQFHGTTIVSVRRGDKVALGGDGQVTLGNIVMKGGARKVRRIYNNQVLVGFAGGTADAFSLLDRFEAKLEKHQGNLTRAAVELAKDWRTDRMLRRLEAMLITADATTTLVITGNGDVLDPEEGICAIGSGGAYAQAAARALAENTELSPREIVEKSLEIAGDMCIYTNHNRIIETIE</sequence>
<evidence type="ECO:0000255" key="1">
    <source>
        <dbReference type="HAMAP-Rule" id="MF_00248"/>
    </source>
</evidence>
<comment type="function">
    <text evidence="1">Protease subunit of a proteasome-like degradation complex believed to be a general protein degrading machinery.</text>
</comment>
<comment type="catalytic activity">
    <reaction evidence="1">
        <text>ATP-dependent cleavage of peptide bonds with broad specificity.</text>
        <dbReference type="EC" id="3.4.25.2"/>
    </reaction>
</comment>
<comment type="activity regulation">
    <text evidence="1">Allosterically activated by HslU binding.</text>
</comment>
<comment type="subunit">
    <text evidence="1">A double ring-shaped homohexamer of HslV is capped on each side by a ring-shaped HslU homohexamer. The assembly of the HslU/HslV complex is dependent on binding of ATP.</text>
</comment>
<comment type="subcellular location">
    <subcellularLocation>
        <location evidence="1">Cytoplasm</location>
    </subcellularLocation>
</comment>
<comment type="similarity">
    <text evidence="1">Belongs to the peptidase T1B family. HslV subfamily.</text>
</comment>
<keyword id="KW-0021">Allosteric enzyme</keyword>
<keyword id="KW-0963">Cytoplasm</keyword>
<keyword id="KW-0378">Hydrolase</keyword>
<keyword id="KW-0479">Metal-binding</keyword>
<keyword id="KW-0645">Protease</keyword>
<keyword id="KW-0915">Sodium</keyword>
<keyword id="KW-0888">Threonine protease</keyword>
<reference key="1">
    <citation type="submission" date="2005-10" db="EMBL/GenBank/DDBJ databases">
        <title>Complete sequence of chromosome 1 of Burkholderia sp. 383.</title>
        <authorList>
            <consortium name="US DOE Joint Genome Institute"/>
            <person name="Copeland A."/>
            <person name="Lucas S."/>
            <person name="Lapidus A."/>
            <person name="Barry K."/>
            <person name="Detter J.C."/>
            <person name="Glavina T."/>
            <person name="Hammon N."/>
            <person name="Israni S."/>
            <person name="Pitluck S."/>
            <person name="Chain P."/>
            <person name="Malfatti S."/>
            <person name="Shin M."/>
            <person name="Vergez L."/>
            <person name="Schmutz J."/>
            <person name="Larimer F."/>
            <person name="Land M."/>
            <person name="Kyrpides N."/>
            <person name="Lykidis A."/>
            <person name="Richardson P."/>
        </authorList>
    </citation>
    <scope>NUCLEOTIDE SEQUENCE [LARGE SCALE GENOMIC DNA]</scope>
    <source>
        <strain>ATCC 17760 / DSM 23089 / LMG 22485 / NCIMB 9086 / R18194 / 383</strain>
    </source>
</reference>